<evidence type="ECO:0000255" key="1">
    <source>
        <dbReference type="HAMAP-Rule" id="MF_00054"/>
    </source>
</evidence>
<keyword id="KW-0963">Cytoplasm</keyword>
<keyword id="KW-0251">Elongation factor</keyword>
<keyword id="KW-0342">GTP-binding</keyword>
<keyword id="KW-0547">Nucleotide-binding</keyword>
<keyword id="KW-0648">Protein biosynthesis</keyword>
<keyword id="KW-1185">Reference proteome</keyword>
<comment type="function">
    <text evidence="1">Catalyzes the GTP-dependent ribosomal translocation step during translation elongation. During this step, the ribosome changes from the pre-translocational (PRE) to the post-translocational (POST) state as the newly formed A-site-bound peptidyl-tRNA and P-site-bound deacylated tRNA move to the P and E sites, respectively. Catalyzes the coordinated movement of the two tRNA molecules, the mRNA and conformational changes in the ribosome.</text>
</comment>
<comment type="subcellular location">
    <subcellularLocation>
        <location evidence="1">Cytoplasm</location>
    </subcellularLocation>
</comment>
<comment type="similarity">
    <text evidence="1">Belongs to the TRAFAC class translation factor GTPase superfamily. Classic translation factor GTPase family. EF-G/EF-2 subfamily.</text>
</comment>
<reference key="1">
    <citation type="submission" date="2006-08" db="EMBL/GenBank/DDBJ databases">
        <title>Complete sequence of Alkalilimnicola ehrilichei MLHE-1.</title>
        <authorList>
            <person name="Copeland A."/>
            <person name="Lucas S."/>
            <person name="Lapidus A."/>
            <person name="Barry K."/>
            <person name="Detter J.C."/>
            <person name="Glavina del Rio T."/>
            <person name="Hammon N."/>
            <person name="Israni S."/>
            <person name="Dalin E."/>
            <person name="Tice H."/>
            <person name="Pitluck S."/>
            <person name="Sims D."/>
            <person name="Brettin T."/>
            <person name="Bruce D."/>
            <person name="Han C."/>
            <person name="Tapia R."/>
            <person name="Gilna P."/>
            <person name="Schmutz J."/>
            <person name="Larimer F."/>
            <person name="Land M."/>
            <person name="Hauser L."/>
            <person name="Kyrpides N."/>
            <person name="Mikhailova N."/>
            <person name="Oremland R.S."/>
            <person name="Hoeft S.E."/>
            <person name="Switzer-Blum J."/>
            <person name="Kulp T."/>
            <person name="King G."/>
            <person name="Tabita R."/>
            <person name="Witte B."/>
            <person name="Santini J.M."/>
            <person name="Basu P."/>
            <person name="Hollibaugh J.T."/>
            <person name="Xie G."/>
            <person name="Stolz J.F."/>
            <person name="Richardson P."/>
        </authorList>
    </citation>
    <scope>NUCLEOTIDE SEQUENCE [LARGE SCALE GENOMIC DNA]</scope>
    <source>
        <strain>ATCC BAA-1101 / DSM 17681 / MLHE-1</strain>
    </source>
</reference>
<sequence>MARKTPIERYRNIGIMAHIDAGKTTATERILFYTGISHKIGETHEGAAVMDWMSQEQERGITITSAATTAFWQGMDQQYPQHRINIIDTPGHVDFTIEVERSLRVLDGAIAVFCAVGGVEPQSETVWRQATKYEVPRMAFVNKMDRAGANFGRVVEQIRTRLKATPVPLQLPIGAEDEFKGVVDLVRMKAIYWNEEDMGVTYEQTDVPAELADEAAEAREFLVEAAAEADEELMDKYLEGGELTVEEINRGLRARTLANEIVPAFCGSAFKNKGVQALLDGVIEYLPSPVDVPAIEGELDDADGTVATRKPGDDQPFAALAFKIATDPYVGTLTFFRVYSGVVQTGDTVFNPVKGKKERLGRIVQMHANSREEIKEVRAGDIAAAVGLKDVTTGDTLCDINNKITLERMEFPDPVISVAVEPKTKGDQEKMGMALGKLAQEDPSFQVRTDEESGQTIISGMGELHLDIIVDRLKREFKVEANVGAPQVAYRETIRKTVEQEGKFVRQSGGRGQYGHVHLRISPQERNAGYEFVNSIVGGVVPKEYIPSVDKGAYEALENGILAGFPAIDVKVELYDGSYHDVDSSEAAFKIAGSMAMKEGFMKADPVLLEPIMRVEVVTPEEYMGDVMGDLNRRRGTVQGMEDGPSGKIIRAQVPLKEMFGYATDLRSATQGRASYVMFFDEYQEAPASIADEIIKKAS</sequence>
<organism>
    <name type="scientific">Alkalilimnicola ehrlichii (strain ATCC BAA-1101 / DSM 17681 / MLHE-1)</name>
    <dbReference type="NCBI Taxonomy" id="187272"/>
    <lineage>
        <taxon>Bacteria</taxon>
        <taxon>Pseudomonadati</taxon>
        <taxon>Pseudomonadota</taxon>
        <taxon>Gammaproteobacteria</taxon>
        <taxon>Chromatiales</taxon>
        <taxon>Ectothiorhodospiraceae</taxon>
        <taxon>Alkalilimnicola</taxon>
    </lineage>
</organism>
<name>EFG_ALKEH</name>
<accession>Q0ABH8</accession>
<gene>
    <name evidence="1" type="primary">fusA</name>
    <name type="ordered locus">Mlg_0455</name>
</gene>
<dbReference type="EMBL" id="CP000453">
    <property type="protein sequence ID" value="ABI55809.1"/>
    <property type="molecule type" value="Genomic_DNA"/>
</dbReference>
<dbReference type="RefSeq" id="WP_011628205.1">
    <property type="nucleotide sequence ID" value="NC_008340.1"/>
</dbReference>
<dbReference type="SMR" id="Q0ABH8"/>
<dbReference type="KEGG" id="aeh:Mlg_0455"/>
<dbReference type="eggNOG" id="COG0480">
    <property type="taxonomic scope" value="Bacteria"/>
</dbReference>
<dbReference type="HOGENOM" id="CLU_002794_4_1_6"/>
<dbReference type="OrthoDB" id="9804431at2"/>
<dbReference type="Proteomes" id="UP000001962">
    <property type="component" value="Chromosome"/>
</dbReference>
<dbReference type="GO" id="GO:0005737">
    <property type="term" value="C:cytoplasm"/>
    <property type="evidence" value="ECO:0007669"/>
    <property type="project" value="UniProtKB-SubCell"/>
</dbReference>
<dbReference type="GO" id="GO:0005525">
    <property type="term" value="F:GTP binding"/>
    <property type="evidence" value="ECO:0007669"/>
    <property type="project" value="UniProtKB-UniRule"/>
</dbReference>
<dbReference type="GO" id="GO:0003924">
    <property type="term" value="F:GTPase activity"/>
    <property type="evidence" value="ECO:0007669"/>
    <property type="project" value="InterPro"/>
</dbReference>
<dbReference type="GO" id="GO:0097216">
    <property type="term" value="F:guanosine tetraphosphate binding"/>
    <property type="evidence" value="ECO:0007669"/>
    <property type="project" value="UniProtKB-ARBA"/>
</dbReference>
<dbReference type="GO" id="GO:0003746">
    <property type="term" value="F:translation elongation factor activity"/>
    <property type="evidence" value="ECO:0007669"/>
    <property type="project" value="UniProtKB-UniRule"/>
</dbReference>
<dbReference type="GO" id="GO:0032790">
    <property type="term" value="P:ribosome disassembly"/>
    <property type="evidence" value="ECO:0007669"/>
    <property type="project" value="TreeGrafter"/>
</dbReference>
<dbReference type="CDD" id="cd01886">
    <property type="entry name" value="EF-G"/>
    <property type="match status" value="1"/>
</dbReference>
<dbReference type="CDD" id="cd16262">
    <property type="entry name" value="EFG_III"/>
    <property type="match status" value="1"/>
</dbReference>
<dbReference type="CDD" id="cd01434">
    <property type="entry name" value="EFG_mtEFG1_IV"/>
    <property type="match status" value="1"/>
</dbReference>
<dbReference type="CDD" id="cd03713">
    <property type="entry name" value="EFG_mtEFG_C"/>
    <property type="match status" value="1"/>
</dbReference>
<dbReference type="CDD" id="cd04088">
    <property type="entry name" value="EFG_mtEFG_II"/>
    <property type="match status" value="1"/>
</dbReference>
<dbReference type="FunFam" id="2.40.30.10:FF:000006">
    <property type="entry name" value="Elongation factor G"/>
    <property type="match status" value="1"/>
</dbReference>
<dbReference type="FunFam" id="3.30.230.10:FF:000003">
    <property type="entry name" value="Elongation factor G"/>
    <property type="match status" value="1"/>
</dbReference>
<dbReference type="FunFam" id="3.30.70.240:FF:000001">
    <property type="entry name" value="Elongation factor G"/>
    <property type="match status" value="1"/>
</dbReference>
<dbReference type="FunFam" id="3.30.70.870:FF:000001">
    <property type="entry name" value="Elongation factor G"/>
    <property type="match status" value="1"/>
</dbReference>
<dbReference type="FunFam" id="3.40.50.300:FF:000029">
    <property type="entry name" value="Elongation factor G"/>
    <property type="match status" value="1"/>
</dbReference>
<dbReference type="Gene3D" id="3.30.230.10">
    <property type="match status" value="1"/>
</dbReference>
<dbReference type="Gene3D" id="3.30.70.240">
    <property type="match status" value="1"/>
</dbReference>
<dbReference type="Gene3D" id="3.30.70.870">
    <property type="entry name" value="Elongation Factor G (Translational Gtpase), domain 3"/>
    <property type="match status" value="1"/>
</dbReference>
<dbReference type="Gene3D" id="3.40.50.300">
    <property type="entry name" value="P-loop containing nucleotide triphosphate hydrolases"/>
    <property type="match status" value="1"/>
</dbReference>
<dbReference type="Gene3D" id="2.40.30.10">
    <property type="entry name" value="Translation factors"/>
    <property type="match status" value="1"/>
</dbReference>
<dbReference type="HAMAP" id="MF_00054_B">
    <property type="entry name" value="EF_G_EF_2_B"/>
    <property type="match status" value="1"/>
</dbReference>
<dbReference type="InterPro" id="IPR041095">
    <property type="entry name" value="EFG_II"/>
</dbReference>
<dbReference type="InterPro" id="IPR009022">
    <property type="entry name" value="EFG_III"/>
</dbReference>
<dbReference type="InterPro" id="IPR035647">
    <property type="entry name" value="EFG_III/V"/>
</dbReference>
<dbReference type="InterPro" id="IPR047872">
    <property type="entry name" value="EFG_IV"/>
</dbReference>
<dbReference type="InterPro" id="IPR035649">
    <property type="entry name" value="EFG_V"/>
</dbReference>
<dbReference type="InterPro" id="IPR000640">
    <property type="entry name" value="EFG_V-like"/>
</dbReference>
<dbReference type="InterPro" id="IPR004161">
    <property type="entry name" value="EFTu-like_2"/>
</dbReference>
<dbReference type="InterPro" id="IPR031157">
    <property type="entry name" value="G_TR_CS"/>
</dbReference>
<dbReference type="InterPro" id="IPR027417">
    <property type="entry name" value="P-loop_NTPase"/>
</dbReference>
<dbReference type="InterPro" id="IPR020568">
    <property type="entry name" value="Ribosomal_Su5_D2-typ_SF"/>
</dbReference>
<dbReference type="InterPro" id="IPR014721">
    <property type="entry name" value="Ribsml_uS5_D2-typ_fold_subgr"/>
</dbReference>
<dbReference type="InterPro" id="IPR005225">
    <property type="entry name" value="Small_GTP-bd"/>
</dbReference>
<dbReference type="InterPro" id="IPR000795">
    <property type="entry name" value="T_Tr_GTP-bd_dom"/>
</dbReference>
<dbReference type="InterPro" id="IPR009000">
    <property type="entry name" value="Transl_B-barrel_sf"/>
</dbReference>
<dbReference type="InterPro" id="IPR004540">
    <property type="entry name" value="Transl_elong_EFG/EF2"/>
</dbReference>
<dbReference type="InterPro" id="IPR005517">
    <property type="entry name" value="Transl_elong_EFG/EF2_IV"/>
</dbReference>
<dbReference type="NCBIfam" id="TIGR00484">
    <property type="entry name" value="EF-G"/>
    <property type="match status" value="1"/>
</dbReference>
<dbReference type="NCBIfam" id="NF009379">
    <property type="entry name" value="PRK12740.1-3"/>
    <property type="match status" value="1"/>
</dbReference>
<dbReference type="NCBIfam" id="NF009381">
    <property type="entry name" value="PRK12740.1-5"/>
    <property type="match status" value="1"/>
</dbReference>
<dbReference type="NCBIfam" id="TIGR00231">
    <property type="entry name" value="small_GTP"/>
    <property type="match status" value="1"/>
</dbReference>
<dbReference type="PANTHER" id="PTHR43261:SF1">
    <property type="entry name" value="RIBOSOME-RELEASING FACTOR 2, MITOCHONDRIAL"/>
    <property type="match status" value="1"/>
</dbReference>
<dbReference type="PANTHER" id="PTHR43261">
    <property type="entry name" value="TRANSLATION ELONGATION FACTOR G-RELATED"/>
    <property type="match status" value="1"/>
</dbReference>
<dbReference type="Pfam" id="PF00679">
    <property type="entry name" value="EFG_C"/>
    <property type="match status" value="1"/>
</dbReference>
<dbReference type="Pfam" id="PF14492">
    <property type="entry name" value="EFG_III"/>
    <property type="match status" value="1"/>
</dbReference>
<dbReference type="Pfam" id="PF03764">
    <property type="entry name" value="EFG_IV"/>
    <property type="match status" value="1"/>
</dbReference>
<dbReference type="Pfam" id="PF00009">
    <property type="entry name" value="GTP_EFTU"/>
    <property type="match status" value="1"/>
</dbReference>
<dbReference type="Pfam" id="PF03144">
    <property type="entry name" value="GTP_EFTU_D2"/>
    <property type="match status" value="1"/>
</dbReference>
<dbReference type="PRINTS" id="PR00315">
    <property type="entry name" value="ELONGATNFCT"/>
</dbReference>
<dbReference type="SMART" id="SM00838">
    <property type="entry name" value="EFG_C"/>
    <property type="match status" value="1"/>
</dbReference>
<dbReference type="SMART" id="SM00889">
    <property type="entry name" value="EFG_IV"/>
    <property type="match status" value="1"/>
</dbReference>
<dbReference type="SUPFAM" id="SSF54980">
    <property type="entry name" value="EF-G C-terminal domain-like"/>
    <property type="match status" value="2"/>
</dbReference>
<dbReference type="SUPFAM" id="SSF52540">
    <property type="entry name" value="P-loop containing nucleoside triphosphate hydrolases"/>
    <property type="match status" value="1"/>
</dbReference>
<dbReference type="SUPFAM" id="SSF54211">
    <property type="entry name" value="Ribosomal protein S5 domain 2-like"/>
    <property type="match status" value="1"/>
</dbReference>
<dbReference type="SUPFAM" id="SSF50447">
    <property type="entry name" value="Translation proteins"/>
    <property type="match status" value="1"/>
</dbReference>
<dbReference type="PROSITE" id="PS00301">
    <property type="entry name" value="G_TR_1"/>
    <property type="match status" value="1"/>
</dbReference>
<dbReference type="PROSITE" id="PS51722">
    <property type="entry name" value="G_TR_2"/>
    <property type="match status" value="1"/>
</dbReference>
<protein>
    <recommendedName>
        <fullName evidence="1">Elongation factor G</fullName>
        <shortName evidence="1">EF-G</shortName>
    </recommendedName>
</protein>
<proteinExistence type="inferred from homology"/>
<feature type="chain" id="PRO_0000263421" description="Elongation factor G">
    <location>
        <begin position="1"/>
        <end position="699"/>
    </location>
</feature>
<feature type="domain" description="tr-type G">
    <location>
        <begin position="8"/>
        <end position="290"/>
    </location>
</feature>
<feature type="binding site" evidence="1">
    <location>
        <begin position="17"/>
        <end position="24"/>
    </location>
    <ligand>
        <name>GTP</name>
        <dbReference type="ChEBI" id="CHEBI:37565"/>
    </ligand>
</feature>
<feature type="binding site" evidence="1">
    <location>
        <begin position="88"/>
        <end position="92"/>
    </location>
    <ligand>
        <name>GTP</name>
        <dbReference type="ChEBI" id="CHEBI:37565"/>
    </ligand>
</feature>
<feature type="binding site" evidence="1">
    <location>
        <begin position="142"/>
        <end position="145"/>
    </location>
    <ligand>
        <name>GTP</name>
        <dbReference type="ChEBI" id="CHEBI:37565"/>
    </ligand>
</feature>